<protein>
    <recommendedName>
        <fullName>Protein ECM34</fullName>
    </recommendedName>
    <alternativeName>
        <fullName>Extracellular mutant protein 34</fullName>
    </alternativeName>
</protein>
<organism>
    <name type="scientific">Saccharomyces cerevisiae (strain ATCC 204508 / S288c)</name>
    <name type="common">Baker's yeast</name>
    <dbReference type="NCBI Taxonomy" id="559292"/>
    <lineage>
        <taxon>Eukaryota</taxon>
        <taxon>Fungi</taxon>
        <taxon>Dikarya</taxon>
        <taxon>Ascomycota</taxon>
        <taxon>Saccharomycotina</taxon>
        <taxon>Saccharomycetes</taxon>
        <taxon>Saccharomycetales</taxon>
        <taxon>Saccharomycetaceae</taxon>
        <taxon>Saccharomyces</taxon>
    </lineage>
</organism>
<feature type="chain" id="PRO_0000207532" description="Protein ECM34">
    <location>
        <begin position="1"/>
        <end position="170"/>
    </location>
</feature>
<feature type="transmembrane region" description="Helical" evidence="1">
    <location>
        <begin position="51"/>
        <end position="71"/>
    </location>
</feature>
<feature type="transmembrane region" description="Helical" evidence="1">
    <location>
        <begin position="98"/>
        <end position="118"/>
    </location>
</feature>
<feature type="glycosylation site" description="N-linked (GlcNAc...) asparagine" evidence="1">
    <location>
        <position position="45"/>
    </location>
</feature>
<gene>
    <name type="primary">ECM34</name>
    <name type="ordered locus">YHL043W</name>
</gene>
<comment type="function">
    <text>May be involved in cell wall organization and biogenesis.</text>
</comment>
<comment type="subcellular location">
    <subcellularLocation>
        <location evidence="2">Membrane</location>
        <topology evidence="2">Multi-pass membrane protein</topology>
    </subcellularLocation>
</comment>
<comment type="similarity">
    <text evidence="2">Belongs to the DUP/COS family.</text>
</comment>
<keyword id="KW-0961">Cell wall biogenesis/degradation</keyword>
<keyword id="KW-0325">Glycoprotein</keyword>
<keyword id="KW-0472">Membrane</keyword>
<keyword id="KW-1185">Reference proteome</keyword>
<keyword id="KW-0812">Transmembrane</keyword>
<keyword id="KW-1133">Transmembrane helix</keyword>
<evidence type="ECO:0000255" key="1"/>
<evidence type="ECO:0000305" key="2"/>
<accession>P38728</accession>
<accession>D3DKS7</accession>
<reference key="1">
    <citation type="journal article" date="1994" name="Science">
        <title>Complete nucleotide sequence of Saccharomyces cerevisiae chromosome VIII.</title>
        <authorList>
            <person name="Johnston M."/>
            <person name="Andrews S."/>
            <person name="Brinkman R."/>
            <person name="Cooper J."/>
            <person name="Ding H."/>
            <person name="Dover J."/>
            <person name="Du Z."/>
            <person name="Favello A."/>
            <person name="Fulton L."/>
            <person name="Gattung S."/>
            <person name="Geisel C."/>
            <person name="Kirsten J."/>
            <person name="Kucaba T."/>
            <person name="Hillier L.W."/>
            <person name="Jier M."/>
            <person name="Johnston L."/>
            <person name="Langston Y."/>
            <person name="Latreille P."/>
            <person name="Louis E.J."/>
            <person name="Macri C."/>
            <person name="Mardis E."/>
            <person name="Menezes S."/>
            <person name="Mouser L."/>
            <person name="Nhan M."/>
            <person name="Rifkin L."/>
            <person name="Riles L."/>
            <person name="St Peter H."/>
            <person name="Trevaskis E."/>
            <person name="Vaughan K."/>
            <person name="Vignati D."/>
            <person name="Wilcox L."/>
            <person name="Wohldman P."/>
            <person name="Waterston R."/>
            <person name="Wilson R."/>
            <person name="Vaudin M."/>
        </authorList>
    </citation>
    <scope>NUCLEOTIDE SEQUENCE [LARGE SCALE GENOMIC DNA]</scope>
    <source>
        <strain>ATCC 204508 / S288c</strain>
    </source>
</reference>
<reference key="2">
    <citation type="journal article" date="2014" name="G3 (Bethesda)">
        <title>The reference genome sequence of Saccharomyces cerevisiae: Then and now.</title>
        <authorList>
            <person name="Engel S.R."/>
            <person name="Dietrich F.S."/>
            <person name="Fisk D.G."/>
            <person name="Binkley G."/>
            <person name="Balakrishnan R."/>
            <person name="Costanzo M.C."/>
            <person name="Dwight S.S."/>
            <person name="Hitz B.C."/>
            <person name="Karra K."/>
            <person name="Nash R.S."/>
            <person name="Weng S."/>
            <person name="Wong E.D."/>
            <person name="Lloyd P."/>
            <person name="Skrzypek M.S."/>
            <person name="Miyasato S.R."/>
            <person name="Simison M."/>
            <person name="Cherry J.M."/>
        </authorList>
    </citation>
    <scope>GENOME REANNOTATION</scope>
    <source>
        <strain>ATCC 204508 / S288c</strain>
    </source>
</reference>
<reference key="3">
    <citation type="journal article" date="1997" name="Genetics">
        <title>Large scale identification of genes involved in cell surface biosynthesis and architecture in Saccharomyces cerevisiae.</title>
        <authorList>
            <person name="Lussier M."/>
            <person name="White A.-M."/>
            <person name="Sheraton J."/>
            <person name="di Paolo T."/>
            <person name="Treadwell J."/>
            <person name="Southard S.B."/>
            <person name="Horenstein C.I."/>
            <person name="Chen-Weiner J."/>
            <person name="Ram A.F.J."/>
            <person name="Kapteyn J.C."/>
            <person name="Roemer T.W."/>
            <person name="Vo D.H."/>
            <person name="Bondoc D.C."/>
            <person name="Hall J."/>
            <person name="Zhong W.-W."/>
            <person name="Sdicu A.-M."/>
            <person name="Davies J."/>
            <person name="Klis F.M."/>
            <person name="Robbins P.W."/>
            <person name="Bussey H."/>
        </authorList>
    </citation>
    <scope>IDENTIFICATION</scope>
</reference>
<sequence length="170" mass="19812">MEGRKSEDEKNEAALACDVFESSNAKLPKNVFRSSFTWYCYEVINRSAFHIWLLLCLTLIVGWKVFSGIGGRRPSDSNMDGPQTKHKRNPGFLRRHSTIVILVISLAVSFSWEAFKMYRERTFGKQITQFAKEIIKSAPSTDMESWDRVAADFNSYMYENKLWNTEYFFC</sequence>
<dbReference type="EMBL" id="U11583">
    <property type="protein sequence ID" value="AAB65055.1"/>
    <property type="molecule type" value="Genomic_DNA"/>
</dbReference>
<dbReference type="EMBL" id="BK006934">
    <property type="protein sequence ID" value="DAA06644.1"/>
    <property type="molecule type" value="Genomic_DNA"/>
</dbReference>
<dbReference type="PIR" id="S48925">
    <property type="entry name" value="S48925"/>
</dbReference>
<dbReference type="RefSeq" id="NP_011820.1">
    <property type="nucleotide sequence ID" value="NM_001179123.1"/>
</dbReference>
<dbReference type="BioGRID" id="36381">
    <property type="interactions" value="35"/>
</dbReference>
<dbReference type="DIP" id="DIP-4408N"/>
<dbReference type="FunCoup" id="P38728">
    <property type="interactions" value="23"/>
</dbReference>
<dbReference type="IntAct" id="P38728">
    <property type="interactions" value="1"/>
</dbReference>
<dbReference type="STRING" id="4932.YHL043W"/>
<dbReference type="GlyCosmos" id="P38728">
    <property type="glycosylation" value="1 site, No reported glycans"/>
</dbReference>
<dbReference type="GlyGen" id="P38728">
    <property type="glycosylation" value="1 site"/>
</dbReference>
<dbReference type="PaxDb" id="4932-YHL043W"/>
<dbReference type="EnsemblFungi" id="YHL043W_mRNA">
    <property type="protein sequence ID" value="YHL043W"/>
    <property type="gene ID" value="YHL043W"/>
</dbReference>
<dbReference type="GeneID" id="856342"/>
<dbReference type="KEGG" id="sce:YHL043W"/>
<dbReference type="AGR" id="SGD:S000001035"/>
<dbReference type="SGD" id="S000001035">
    <property type="gene designation" value="ECM34"/>
</dbReference>
<dbReference type="VEuPathDB" id="FungiDB:YHL043W"/>
<dbReference type="GeneTree" id="ENSGT00940000176283"/>
<dbReference type="HOGENOM" id="CLU_1548830_0_0_1"/>
<dbReference type="InParanoid" id="P38728"/>
<dbReference type="OMA" id="WEVVXAN"/>
<dbReference type="OrthoDB" id="4037681at2759"/>
<dbReference type="BioCyc" id="YEAST:G3O-31060-MONOMER"/>
<dbReference type="BioGRID-ORCS" id="856342">
    <property type="hits" value="0 hits in 10 CRISPR screens"/>
</dbReference>
<dbReference type="PRO" id="PR:P38728"/>
<dbReference type="Proteomes" id="UP000002311">
    <property type="component" value="Chromosome VIII"/>
</dbReference>
<dbReference type="RNAct" id="P38728">
    <property type="molecule type" value="protein"/>
</dbReference>
<dbReference type="GO" id="GO:0005829">
    <property type="term" value="C:cytosol"/>
    <property type="evidence" value="ECO:0007005"/>
    <property type="project" value="SGD"/>
</dbReference>
<dbReference type="GO" id="GO:0016020">
    <property type="term" value="C:membrane"/>
    <property type="evidence" value="ECO:0007669"/>
    <property type="project" value="UniProtKB-SubCell"/>
</dbReference>
<dbReference type="GO" id="GO:0071555">
    <property type="term" value="P:cell wall organization"/>
    <property type="evidence" value="ECO:0007669"/>
    <property type="project" value="UniProtKB-KW"/>
</dbReference>
<dbReference type="InterPro" id="IPR001142">
    <property type="entry name" value="DUP/COS"/>
</dbReference>
<dbReference type="Pfam" id="PF00674">
    <property type="entry name" value="DUP"/>
    <property type="match status" value="1"/>
</dbReference>
<name>ECM34_YEAST</name>
<proteinExistence type="inferred from homology"/>